<organism>
    <name type="scientific">Shigella flexneri</name>
    <dbReference type="NCBI Taxonomy" id="623"/>
    <lineage>
        <taxon>Bacteria</taxon>
        <taxon>Pseudomonadati</taxon>
        <taxon>Pseudomonadota</taxon>
        <taxon>Gammaproteobacteria</taxon>
        <taxon>Enterobacterales</taxon>
        <taxon>Enterobacteriaceae</taxon>
        <taxon>Shigella</taxon>
    </lineage>
</organism>
<protein>
    <recommendedName>
        <fullName evidence="1">Probable ECA polymerase</fullName>
    </recommendedName>
</protein>
<gene>
    <name evidence="1" type="primary">wzyE</name>
    <name type="synonym">wecF</name>
    <name type="ordered locus">SF3868</name>
    <name type="ordered locus">S3892</name>
</gene>
<comment type="function">
    <text evidence="1">Probably involved in the polymerization of enterobacterial common antigen (ECA) trisaccharide repeat units.</text>
</comment>
<comment type="pathway">
    <text evidence="1">Bacterial outer membrane biogenesis; enterobacterial common antigen biosynthesis.</text>
</comment>
<comment type="subunit">
    <text evidence="1">Probably part of a complex composed of WzxE, WzyE and WzzE.</text>
</comment>
<comment type="subcellular location">
    <subcellularLocation>
        <location evidence="1">Cell inner membrane</location>
        <topology evidence="1">Multi-pass membrane protein</topology>
    </subcellularLocation>
</comment>
<comment type="similarity">
    <text evidence="1">Belongs to the WzyE family.</text>
</comment>
<accession>Q83IX6</accession>
<feature type="chain" id="PRO_0000208545" description="Probable ECA polymerase">
    <location>
        <begin position="1"/>
        <end position="450"/>
    </location>
</feature>
<feature type="transmembrane region" description="Helical" evidence="1">
    <location>
        <begin position="6"/>
        <end position="26"/>
    </location>
</feature>
<feature type="transmembrane region" description="Helical" evidence="1">
    <location>
        <begin position="37"/>
        <end position="57"/>
    </location>
</feature>
<feature type="transmembrane region" description="Helical" evidence="1">
    <location>
        <begin position="63"/>
        <end position="83"/>
    </location>
</feature>
<feature type="transmembrane region" description="Helical" evidence="1">
    <location>
        <begin position="118"/>
        <end position="138"/>
    </location>
</feature>
<feature type="transmembrane region" description="Helical" evidence="1">
    <location>
        <begin position="155"/>
        <end position="175"/>
    </location>
</feature>
<feature type="transmembrane region" description="Helical" evidence="1">
    <location>
        <begin position="181"/>
        <end position="201"/>
    </location>
</feature>
<feature type="transmembrane region" description="Helical" evidence="1">
    <location>
        <begin position="207"/>
        <end position="227"/>
    </location>
</feature>
<feature type="transmembrane region" description="Helical" evidence="1">
    <location>
        <begin position="228"/>
        <end position="248"/>
    </location>
</feature>
<feature type="transmembrane region" description="Helical" evidence="1">
    <location>
        <begin position="341"/>
        <end position="361"/>
    </location>
</feature>
<feature type="transmembrane region" description="Helical" evidence="1">
    <location>
        <begin position="378"/>
        <end position="398"/>
    </location>
</feature>
<feature type="transmembrane region" description="Helical" evidence="1">
    <location>
        <begin position="410"/>
        <end position="430"/>
    </location>
</feature>
<evidence type="ECO:0000255" key="1">
    <source>
        <dbReference type="HAMAP-Rule" id="MF_01003"/>
    </source>
</evidence>
<sequence>MSLLQFSGLFVVWLLCTLFIATLTWFEFRRVRFNFNVFFSLLFLLTFFFGFPLTSVLVFRFDVGVAPPEILLQVLLSAGCFYAVYYVTYKTRLRKRVADVPRRPLFTMNRVETNLTWVILMGIALVSVGIFFMHNGFLLFRLNSYSQIFSSEVSGVALKRFFYFFIPAMLVVYFLRQDSKAWLFFLVSTVAFGLLTYMIVGGTRANIIIAFAIFLFIGIIRGWISLWMLAAAGVLGIVGMFWLALKRYGMNVSGDEAFYTFLYLTRDTFSPWENLALLLQNYDNIDFQGLAPIVRDFYVFIPSWLWPGRPSMVLNSANYFTWEVLNNHSGLAISPTLIGSLVVMGGALFIPLGAIVVGLIIKWFDWLYELGNRETNRYKAAILHSFCFGAIFNMIVLAREGLDSFVSRVVFFIVVFGACLMIAKLLYWLFESAGLIHKRTKSSLRTQVEG</sequence>
<proteinExistence type="inferred from homology"/>
<name>WZYE_SHIFL</name>
<dbReference type="EMBL" id="AE005674">
    <property type="protein sequence ID" value="AAN45305.1"/>
    <property type="molecule type" value="Genomic_DNA"/>
</dbReference>
<dbReference type="EMBL" id="AE014073">
    <property type="protein sequence ID" value="AAP18893.1"/>
    <property type="molecule type" value="Genomic_DNA"/>
</dbReference>
<dbReference type="RefSeq" id="NP_709598.1">
    <property type="nucleotide sequence ID" value="NC_004337.2"/>
</dbReference>
<dbReference type="RefSeq" id="WP_000055146.1">
    <property type="nucleotide sequence ID" value="NZ_WPGW01000028.1"/>
</dbReference>
<dbReference type="STRING" id="198214.SF3868"/>
<dbReference type="PaxDb" id="198214-SF3868"/>
<dbReference type="GeneID" id="1025963"/>
<dbReference type="KEGG" id="sfl:SF3868"/>
<dbReference type="KEGG" id="sfx:S3892"/>
<dbReference type="PATRIC" id="fig|198214.7.peg.4558"/>
<dbReference type="HOGENOM" id="CLU_049711_0_0_6"/>
<dbReference type="UniPathway" id="UPA00566"/>
<dbReference type="Proteomes" id="UP000001006">
    <property type="component" value="Chromosome"/>
</dbReference>
<dbReference type="Proteomes" id="UP000002673">
    <property type="component" value="Chromosome"/>
</dbReference>
<dbReference type="GO" id="GO:0005886">
    <property type="term" value="C:plasma membrane"/>
    <property type="evidence" value="ECO:0007669"/>
    <property type="project" value="UniProtKB-SubCell"/>
</dbReference>
<dbReference type="GO" id="GO:0009246">
    <property type="term" value="P:enterobacterial common antigen biosynthetic process"/>
    <property type="evidence" value="ECO:0007669"/>
    <property type="project" value="UniProtKB-UniRule"/>
</dbReference>
<dbReference type="HAMAP" id="MF_01003">
    <property type="entry name" value="WzyE"/>
    <property type="match status" value="1"/>
</dbReference>
<dbReference type="InterPro" id="IPR010691">
    <property type="entry name" value="WzyE"/>
</dbReference>
<dbReference type="NCBIfam" id="NF002820">
    <property type="entry name" value="PRK02975.1"/>
    <property type="match status" value="1"/>
</dbReference>
<dbReference type="Pfam" id="PF06899">
    <property type="entry name" value="WzyE"/>
    <property type="match status" value="1"/>
</dbReference>
<keyword id="KW-0997">Cell inner membrane</keyword>
<keyword id="KW-1003">Cell membrane</keyword>
<keyword id="KW-0472">Membrane</keyword>
<keyword id="KW-1185">Reference proteome</keyword>
<keyword id="KW-0812">Transmembrane</keyword>
<keyword id="KW-1133">Transmembrane helix</keyword>
<reference key="1">
    <citation type="journal article" date="2002" name="Nucleic Acids Res.">
        <title>Genome sequence of Shigella flexneri 2a: insights into pathogenicity through comparison with genomes of Escherichia coli K12 and O157.</title>
        <authorList>
            <person name="Jin Q."/>
            <person name="Yuan Z."/>
            <person name="Xu J."/>
            <person name="Wang Y."/>
            <person name="Shen Y."/>
            <person name="Lu W."/>
            <person name="Wang J."/>
            <person name="Liu H."/>
            <person name="Yang J."/>
            <person name="Yang F."/>
            <person name="Zhang X."/>
            <person name="Zhang J."/>
            <person name="Yang G."/>
            <person name="Wu H."/>
            <person name="Qu D."/>
            <person name="Dong J."/>
            <person name="Sun L."/>
            <person name="Xue Y."/>
            <person name="Zhao A."/>
            <person name="Gao Y."/>
            <person name="Zhu J."/>
            <person name="Kan B."/>
            <person name="Ding K."/>
            <person name="Chen S."/>
            <person name="Cheng H."/>
            <person name="Yao Z."/>
            <person name="He B."/>
            <person name="Chen R."/>
            <person name="Ma D."/>
            <person name="Qiang B."/>
            <person name="Wen Y."/>
            <person name="Hou Y."/>
            <person name="Yu J."/>
        </authorList>
    </citation>
    <scope>NUCLEOTIDE SEQUENCE [LARGE SCALE GENOMIC DNA]</scope>
    <source>
        <strain>301 / Serotype 2a</strain>
    </source>
</reference>
<reference key="2">
    <citation type="journal article" date="2003" name="Infect. Immun.">
        <title>Complete genome sequence and comparative genomics of Shigella flexneri serotype 2a strain 2457T.</title>
        <authorList>
            <person name="Wei J."/>
            <person name="Goldberg M.B."/>
            <person name="Burland V."/>
            <person name="Venkatesan M.M."/>
            <person name="Deng W."/>
            <person name="Fournier G."/>
            <person name="Mayhew G.F."/>
            <person name="Plunkett G. III"/>
            <person name="Rose D.J."/>
            <person name="Darling A."/>
            <person name="Mau B."/>
            <person name="Perna N.T."/>
            <person name="Payne S.M."/>
            <person name="Runyen-Janecky L.J."/>
            <person name="Zhou S."/>
            <person name="Schwartz D.C."/>
            <person name="Blattner F.R."/>
        </authorList>
    </citation>
    <scope>NUCLEOTIDE SEQUENCE [LARGE SCALE GENOMIC DNA]</scope>
    <source>
        <strain>ATCC 700930 / 2457T / Serotype 2a</strain>
    </source>
</reference>